<reference key="1">
    <citation type="journal article" date="2002" name="Nature">
        <title>The genome sequence and structure of rice chromosome 1.</title>
        <authorList>
            <person name="Sasaki T."/>
            <person name="Matsumoto T."/>
            <person name="Yamamoto K."/>
            <person name="Sakata K."/>
            <person name="Baba T."/>
            <person name="Katayose Y."/>
            <person name="Wu J."/>
            <person name="Niimura Y."/>
            <person name="Cheng Z."/>
            <person name="Nagamura Y."/>
            <person name="Antonio B.A."/>
            <person name="Kanamori H."/>
            <person name="Hosokawa S."/>
            <person name="Masukawa M."/>
            <person name="Arikawa K."/>
            <person name="Chiden Y."/>
            <person name="Hayashi M."/>
            <person name="Okamoto M."/>
            <person name="Ando T."/>
            <person name="Aoki H."/>
            <person name="Arita K."/>
            <person name="Hamada M."/>
            <person name="Harada C."/>
            <person name="Hijishita S."/>
            <person name="Honda M."/>
            <person name="Ichikawa Y."/>
            <person name="Idonuma A."/>
            <person name="Iijima M."/>
            <person name="Ikeda M."/>
            <person name="Ikeno M."/>
            <person name="Ito S."/>
            <person name="Ito T."/>
            <person name="Ito Y."/>
            <person name="Ito Y."/>
            <person name="Iwabuchi A."/>
            <person name="Kamiya K."/>
            <person name="Karasawa W."/>
            <person name="Katagiri S."/>
            <person name="Kikuta A."/>
            <person name="Kobayashi N."/>
            <person name="Kono I."/>
            <person name="Machita K."/>
            <person name="Maehara T."/>
            <person name="Mizuno H."/>
            <person name="Mizubayashi T."/>
            <person name="Mukai Y."/>
            <person name="Nagasaki H."/>
            <person name="Nakashima M."/>
            <person name="Nakama Y."/>
            <person name="Nakamichi Y."/>
            <person name="Nakamura M."/>
            <person name="Namiki N."/>
            <person name="Negishi M."/>
            <person name="Ohta I."/>
            <person name="Ono N."/>
            <person name="Saji S."/>
            <person name="Sakai K."/>
            <person name="Shibata M."/>
            <person name="Shimokawa T."/>
            <person name="Shomura A."/>
            <person name="Song J."/>
            <person name="Takazaki Y."/>
            <person name="Terasawa K."/>
            <person name="Tsuji K."/>
            <person name="Waki K."/>
            <person name="Yamagata H."/>
            <person name="Yamane H."/>
            <person name="Yoshiki S."/>
            <person name="Yoshihara R."/>
            <person name="Yukawa K."/>
            <person name="Zhong H."/>
            <person name="Iwama H."/>
            <person name="Endo T."/>
            <person name="Ito H."/>
            <person name="Hahn J.H."/>
            <person name="Kim H.-I."/>
            <person name="Eun M.-Y."/>
            <person name="Yano M."/>
            <person name="Jiang J."/>
            <person name="Gojobori T."/>
        </authorList>
    </citation>
    <scope>NUCLEOTIDE SEQUENCE [LARGE SCALE GENOMIC DNA]</scope>
    <source>
        <strain>cv. Nipponbare</strain>
    </source>
</reference>
<reference key="2">
    <citation type="journal article" date="2005" name="Nature">
        <title>The map-based sequence of the rice genome.</title>
        <authorList>
            <consortium name="International rice genome sequencing project (IRGSP)"/>
        </authorList>
    </citation>
    <scope>NUCLEOTIDE SEQUENCE [LARGE SCALE GENOMIC DNA]</scope>
    <source>
        <strain>cv. Nipponbare</strain>
    </source>
</reference>
<reference key="3">
    <citation type="journal article" date="2008" name="Nucleic Acids Res.">
        <title>The rice annotation project database (RAP-DB): 2008 update.</title>
        <authorList>
            <consortium name="The rice annotation project (RAP)"/>
        </authorList>
    </citation>
    <scope>GENOME REANNOTATION</scope>
    <source>
        <strain>cv. Nipponbare</strain>
    </source>
</reference>
<reference key="4">
    <citation type="journal article" date="2013" name="Rice">
        <title>Improvement of the Oryza sativa Nipponbare reference genome using next generation sequence and optical map data.</title>
        <authorList>
            <person name="Kawahara Y."/>
            <person name="de la Bastide M."/>
            <person name="Hamilton J.P."/>
            <person name="Kanamori H."/>
            <person name="McCombie W.R."/>
            <person name="Ouyang S."/>
            <person name="Schwartz D.C."/>
            <person name="Tanaka T."/>
            <person name="Wu J."/>
            <person name="Zhou S."/>
            <person name="Childs K.L."/>
            <person name="Davidson R.M."/>
            <person name="Lin H."/>
            <person name="Quesada-Ocampo L."/>
            <person name="Vaillancourt B."/>
            <person name="Sakai H."/>
            <person name="Lee S.S."/>
            <person name="Kim J."/>
            <person name="Numa H."/>
            <person name="Itoh T."/>
            <person name="Buell C.R."/>
            <person name="Matsumoto T."/>
        </authorList>
    </citation>
    <scope>GENOME REANNOTATION</scope>
    <source>
        <strain>cv. Nipponbare</strain>
    </source>
</reference>
<evidence type="ECO:0000250" key="1">
    <source>
        <dbReference type="UniProtKB" id="B4FZ81"/>
    </source>
</evidence>
<evidence type="ECO:0000255" key="2"/>
<evidence type="ECO:0000256" key="3">
    <source>
        <dbReference type="SAM" id="MobiDB-lite"/>
    </source>
</evidence>
<evidence type="ECO:0000305" key="4"/>
<evidence type="ECO:0000312" key="5">
    <source>
        <dbReference type="EMBL" id="BAD52717.1"/>
    </source>
</evidence>
<evidence type="ECO:0000312" key="6">
    <source>
        <dbReference type="EMBL" id="BAF06287.1"/>
    </source>
</evidence>
<evidence type="ECO:0000312" key="7">
    <source>
        <dbReference type="EMBL" id="EEE55447.1"/>
    </source>
</evidence>
<feature type="transit peptide" description="Chloroplast" evidence="2">
    <location>
        <begin position="1"/>
        <end position="47"/>
    </location>
</feature>
<feature type="chain" id="PRO_0000441848" description="Protein PLASTID TRANSCRIPTIONALLY ACTIVE 12, chloroplastic">
    <location>
        <begin position="48"/>
        <end position="551"/>
    </location>
</feature>
<feature type="region of interest" description="Disordered" evidence="3">
    <location>
        <begin position="76"/>
        <end position="161"/>
    </location>
</feature>
<feature type="region of interest" description="Disordered" evidence="3">
    <location>
        <begin position="463"/>
        <end position="529"/>
    </location>
</feature>
<feature type="compositionally biased region" description="Low complexity" evidence="3">
    <location>
        <begin position="109"/>
        <end position="119"/>
    </location>
</feature>
<feature type="compositionally biased region" description="Acidic residues" evidence="3">
    <location>
        <begin position="467"/>
        <end position="476"/>
    </location>
</feature>
<feature type="compositionally biased region" description="Acidic residues" evidence="3">
    <location>
        <begin position="485"/>
        <end position="498"/>
    </location>
</feature>
<feature type="compositionally biased region" description="Polar residues" evidence="3">
    <location>
        <begin position="505"/>
        <end position="516"/>
    </location>
</feature>
<feature type="compositionally biased region" description="Basic and acidic residues" evidence="3">
    <location>
        <begin position="518"/>
        <end position="529"/>
    </location>
</feature>
<accession>Q0JIZ1</accession>
<accession>Q5ZD13</accession>
<organism>
    <name type="scientific">Oryza sativa subsp. japonica</name>
    <name type="common">Rice</name>
    <dbReference type="NCBI Taxonomy" id="39947"/>
    <lineage>
        <taxon>Eukaryota</taxon>
        <taxon>Viridiplantae</taxon>
        <taxon>Streptophyta</taxon>
        <taxon>Embryophyta</taxon>
        <taxon>Tracheophyta</taxon>
        <taxon>Spermatophyta</taxon>
        <taxon>Magnoliopsida</taxon>
        <taxon>Liliopsida</taxon>
        <taxon>Poales</taxon>
        <taxon>Poaceae</taxon>
        <taxon>BOP clade</taxon>
        <taxon>Oryzoideae</taxon>
        <taxon>Oryzeae</taxon>
        <taxon>Oryzinae</taxon>
        <taxon>Oryza</taxon>
        <taxon>Oryza sativa</taxon>
    </lineage>
</organism>
<keyword id="KW-0150">Chloroplast</keyword>
<keyword id="KW-0934">Plastid</keyword>
<keyword id="KW-1185">Reference proteome</keyword>
<keyword id="KW-0804">Transcription</keyword>
<keyword id="KW-0805">Transcription regulation</keyword>
<keyword id="KW-0809">Transit peptide</keyword>
<name>PTA12_ORYSJ</name>
<proteinExistence type="inferred from homology"/>
<sequence length="551" mass="62581">MASCSRTWLLPGMAPQATAQTVPRPLQSLKVFAGLPHRRRVLFSGVSSRTRRGRIRSVKDDSLHFDPSKIEAPPYSSYFDSTSGQLEPASGARASIPGQEYWPEGTASRVRAARAPAPVGESAGTPSFGKKPGSRRKGYKEQVASATAGRGTETSGDEGESVVAIEASSDETLEETKDSLDEYVVYEMPKEENLSEYEMDKMMGRPHPFVDPQKAMSVGEPKSSEELWWNWRRKSEENEMWSRWQRRRPDVDTVFAKAMAETGQIKIFGDHPTRTEAALAKARRHLFKEERLEAEQRRLEEIGPIAYYSEWVEAYKNKDTSREAVQKHFEETGEDENTQLITMFQHQTAGEFRIMMGTDVRIQRDPLAMRMREDQIKQIWGGDPVYPTINYVHDPDEVADYRGPEFHEPTPEVVPYLMEHGIMITKEELYARLNEEMEDINQDITYLPEVRDPMATAVDIGEHSYNEDSDDDEEDADKVVAQPESLEDDEDDGDDAEDAEGKVSRNWSVLKTTGQAENPKEKSKKDQLSLKEAIADSENLTDFLMDFEEDE</sequence>
<protein>
    <recommendedName>
        <fullName evidence="4">Protein PLASTID TRANSCRIPTIONALLY ACTIVE 12, chloroplastic</fullName>
    </recommendedName>
</protein>
<gene>
    <name evidence="4" type="primary">PTAC12</name>
    <name evidence="6" type="ordered locus">Os01g0769900</name>
    <name evidence="4" type="ordered locus">LOC_Os01g56350</name>
    <name evidence="7" type="ORF">OsJ_03603</name>
    <name evidence="5" type="ORF">P0665A11.10</name>
</gene>
<comment type="function">
    <text evidence="1">Required for the activity of the plastid-encoded RNA polymerase (PEP) and full expression of genes transcribed by PEP. Required for the proper build-up and formation of the PEP-complex. Binds single-stranded (ss) DNA and RNA, but not double-stranded (ds) DNA.</text>
</comment>
<comment type="subunit">
    <text evidence="1">Component of the plastid-encoded plastid RNA polymerase (PEP) complex.</text>
</comment>
<comment type="subcellular location">
    <subcellularLocation>
        <location evidence="2">Plastid</location>
        <location evidence="2">Chloroplast</location>
    </subcellularLocation>
</comment>
<comment type="sequence caution" evidence="4">
    <conflict type="erroneous gene model prediction">
        <sequence resource="EMBL-CDS" id="BAD52717"/>
    </conflict>
</comment>
<dbReference type="EMBL" id="AP003106">
    <property type="protein sequence ID" value="BAD52717.1"/>
    <property type="status" value="ALT_SEQ"/>
    <property type="molecule type" value="Genomic_DNA"/>
</dbReference>
<dbReference type="EMBL" id="AP008207">
    <property type="protein sequence ID" value="BAF06287.1"/>
    <property type="molecule type" value="Genomic_DNA"/>
</dbReference>
<dbReference type="EMBL" id="AP014957">
    <property type="protein sequence ID" value="BAS74541.1"/>
    <property type="molecule type" value="Genomic_DNA"/>
</dbReference>
<dbReference type="EMBL" id="CM000138">
    <property type="protein sequence ID" value="EEE55447.1"/>
    <property type="molecule type" value="Genomic_DNA"/>
</dbReference>
<dbReference type="SMR" id="Q0JIZ1"/>
<dbReference type="FunCoup" id="Q0JIZ1">
    <property type="interactions" value="1279"/>
</dbReference>
<dbReference type="STRING" id="39947.Q0JIZ1"/>
<dbReference type="PaxDb" id="39947-Q0JIZ1"/>
<dbReference type="EnsemblPlants" id="Os01t0769900-01">
    <property type="protein sequence ID" value="Os01t0769900-01"/>
    <property type="gene ID" value="Os01g0769900"/>
</dbReference>
<dbReference type="Gramene" id="Os01t0769900-01">
    <property type="protein sequence ID" value="Os01t0769900-01"/>
    <property type="gene ID" value="Os01g0769900"/>
</dbReference>
<dbReference type="KEGG" id="dosa:Os01g0769900"/>
<dbReference type="KEGG" id="osa:4325601"/>
<dbReference type="eggNOG" id="ENOG502QS8P">
    <property type="taxonomic scope" value="Eukaryota"/>
</dbReference>
<dbReference type="HOGENOM" id="CLU_037383_0_0_1"/>
<dbReference type="InParanoid" id="Q0JIZ1"/>
<dbReference type="OMA" id="GKEYWPE"/>
<dbReference type="OrthoDB" id="2019670at2759"/>
<dbReference type="Proteomes" id="UP000000763">
    <property type="component" value="Chromosome 1"/>
</dbReference>
<dbReference type="Proteomes" id="UP000007752">
    <property type="component" value="Chromosome 1"/>
</dbReference>
<dbReference type="Proteomes" id="UP000059680">
    <property type="component" value="Chromosome 1"/>
</dbReference>
<dbReference type="GO" id="GO:0009507">
    <property type="term" value="C:chloroplast"/>
    <property type="evidence" value="ECO:0000318"/>
    <property type="project" value="GO_Central"/>
</dbReference>
<dbReference type="GO" id="GO:0005634">
    <property type="term" value="C:nucleus"/>
    <property type="evidence" value="ECO:0007669"/>
    <property type="project" value="EnsemblPlants"/>
</dbReference>
<dbReference type="GO" id="GO:0000427">
    <property type="term" value="C:plastid-encoded plastid RNA polymerase complex"/>
    <property type="evidence" value="ECO:0007669"/>
    <property type="project" value="EnsemblPlants"/>
</dbReference>
<dbReference type="GO" id="GO:0140537">
    <property type="term" value="F:transcription regulator activator activity"/>
    <property type="evidence" value="ECO:0007669"/>
    <property type="project" value="EnsemblPlants"/>
</dbReference>
<dbReference type="GO" id="GO:0042793">
    <property type="term" value="P:plastid transcription"/>
    <property type="evidence" value="ECO:0000318"/>
    <property type="project" value="GO_Central"/>
</dbReference>
<dbReference type="GO" id="GO:0045893">
    <property type="term" value="P:positive regulation of DNA-templated transcription"/>
    <property type="evidence" value="ECO:0000318"/>
    <property type="project" value="GO_Central"/>
</dbReference>
<dbReference type="GO" id="GO:0090228">
    <property type="term" value="P:positive regulation of red or far-red light signaling pathway"/>
    <property type="evidence" value="ECO:0007669"/>
    <property type="project" value="EnsemblPlants"/>
</dbReference>
<dbReference type="GO" id="GO:0140922">
    <property type="term" value="P:positive regulation of thermomorphogenesis"/>
    <property type="evidence" value="ECO:0007669"/>
    <property type="project" value="EnsemblPlants"/>
</dbReference>
<dbReference type="GO" id="GO:0030163">
    <property type="term" value="P:protein catabolic process"/>
    <property type="evidence" value="ECO:0007669"/>
    <property type="project" value="EnsemblPlants"/>
</dbReference>
<dbReference type="GO" id="GO:1905421">
    <property type="term" value="P:regulation of plant organ morphogenesis"/>
    <property type="evidence" value="ECO:0007669"/>
    <property type="project" value="EnsemblPlants"/>
</dbReference>
<dbReference type="GO" id="GO:0006357">
    <property type="term" value="P:regulation of transcription by RNA polymerase II"/>
    <property type="evidence" value="ECO:0007669"/>
    <property type="project" value="EnsemblPlants"/>
</dbReference>
<dbReference type="GO" id="GO:0009637">
    <property type="term" value="P:response to blue light"/>
    <property type="evidence" value="ECO:0007669"/>
    <property type="project" value="EnsemblPlants"/>
</dbReference>
<dbReference type="GO" id="GO:0009735">
    <property type="term" value="P:response to cytokinin"/>
    <property type="evidence" value="ECO:0007669"/>
    <property type="project" value="EnsemblPlants"/>
</dbReference>
<dbReference type="GO" id="GO:0010218">
    <property type="term" value="P:response to far red light"/>
    <property type="evidence" value="ECO:0007669"/>
    <property type="project" value="EnsemblPlants"/>
</dbReference>
<dbReference type="GO" id="GO:0010114">
    <property type="term" value="P:response to red light"/>
    <property type="evidence" value="ECO:0007669"/>
    <property type="project" value="EnsemblPlants"/>
</dbReference>
<dbReference type="GO" id="GO:0009266">
    <property type="term" value="P:response to temperature stimulus"/>
    <property type="evidence" value="ECO:0007669"/>
    <property type="project" value="EnsemblPlants"/>
</dbReference>
<dbReference type="GO" id="GO:0009650">
    <property type="term" value="P:UV protection"/>
    <property type="evidence" value="ECO:0007669"/>
    <property type="project" value="EnsemblPlants"/>
</dbReference>
<dbReference type="InterPro" id="IPR034581">
    <property type="entry name" value="PTAC12"/>
</dbReference>
<dbReference type="PANTHER" id="PTHR35720">
    <property type="entry name" value="PROTEIN PLASTID TRANSCRIPTIONALLY ACTIVE 12, CHLOROPLASTIC"/>
    <property type="match status" value="1"/>
</dbReference>
<dbReference type="PANTHER" id="PTHR35720:SF1">
    <property type="entry name" value="PROTEIN PLASTID TRANSCRIPTIONALLY ACTIVE 12, CHLOROPLASTIC"/>
    <property type="match status" value="1"/>
</dbReference>